<keyword id="KW-1003">Cell membrane</keyword>
<keyword id="KW-0868">Chloride</keyword>
<keyword id="KW-0869">Chloride channel</keyword>
<keyword id="KW-1015">Disulfide bond</keyword>
<keyword id="KW-0325">Glycoprotein</keyword>
<keyword id="KW-0407">Ion channel</keyword>
<keyword id="KW-0406">Ion transport</keyword>
<keyword id="KW-1017">Isopeptide bond</keyword>
<keyword id="KW-1071">Ligand-gated ion channel</keyword>
<keyword id="KW-0472">Membrane</keyword>
<keyword id="KW-0628">Postsynaptic cell membrane</keyword>
<keyword id="KW-0675">Receptor</keyword>
<keyword id="KW-1185">Reference proteome</keyword>
<keyword id="KW-0732">Signal</keyword>
<keyword id="KW-0770">Synapse</keyword>
<keyword id="KW-0812">Transmembrane</keyword>
<keyword id="KW-1133">Transmembrane helix</keyword>
<keyword id="KW-0813">Transport</keyword>
<keyword id="KW-0832">Ubl conjugation</keyword>
<comment type="function">
    <text evidence="1 3 6 7 8">Alpha subunit of the heteropentameric ligand-gated chloride channel gated by gamma-aminobutyric acid (GABA), a major inhibitory neurotransmitter in the brain (PubMed:10462548, PubMed:1660002, PubMed:2153588). GABA-gated chloride channels, also named GABA(A) receptors (GABAAR), consist of five subunits arranged around a central pore and contain GABA active binding site(s) located at the alpha and beta subunit interface(s) (By similarity). When activated by GABA, GABAARs selectively allow the flow of chloride anions across the cell membrane down their electrochemical gradient (PubMed:10462548, PubMed:1660002, PubMed:2153588). GABAARs containing alpha-5/GABRA5 subunits are mainly extrasynaptic and contribute to the tonic GABAergic inhibition in the hippocampus (By similarity). Extrasynaptic alpha-5-containing GABAARs in CA1 pyramidal neurons play a role in learning and memory processes (By similarity).</text>
</comment>
<comment type="catalytic activity">
    <reaction evidence="6 7 8">
        <text>chloride(in) = chloride(out)</text>
        <dbReference type="Rhea" id="RHEA:29823"/>
        <dbReference type="ChEBI" id="CHEBI:17996"/>
    </reaction>
</comment>
<comment type="activity regulation">
    <text evidence="6">Allosterically potentiated by alphaxalone. Allosterically inhibited by pregnenolone sulfate. Inhibited by zinc and lanthanum.</text>
</comment>
<comment type="subunit">
    <text evidence="6 7">Heteropentamer, formed by a combination of alpha (GABRA1-6), beta (GABRB1-3), gamma (GABRG1-3), delta (GABRD), epsilon (GABRE), rho (GABRR1-3), pi (GABRP) and theta (GABRQ) chains, each subunit exhibiting distinct physiological and pharmacological properties.</text>
</comment>
<comment type="subcellular location">
    <subcellularLocation>
        <location evidence="1">Postsynaptic cell membrane</location>
        <topology evidence="1">Multi-pass membrane protein</topology>
    </subcellularLocation>
    <subcellularLocation>
        <location evidence="1">Cell membrane</location>
        <topology evidence="1">Multi-pass membrane protein</topology>
    </subcellularLocation>
</comment>
<comment type="tissue specificity">
    <text evidence="8">Expressed in brain areas such as cerebral cortex, hippocampal formation and olfactory bulb granular layer.</text>
</comment>
<comment type="domain">
    <text evidence="1">GABAARs subunits share a common topological structure: a peptide sequence made up of a long extracellular N-terminal, four transmembrane domains, intracellular or cytoplasmic domain located between the third and the fourth transmembrane domains.</text>
</comment>
<comment type="similarity">
    <text evidence="10">Belongs to the ligand-gated ion channel (TC 1.A.9) family. Gamma-aminobutyric acid receptor (TC 1.A.9.5) subfamily. GABRA5 sub-subfamily.</text>
</comment>
<proteinExistence type="evidence at protein level"/>
<gene>
    <name evidence="11" type="primary">Gabra5</name>
    <name type="synonym">Gabra-5</name>
</gene>
<feature type="signal peptide" evidence="4">
    <location>
        <begin position="1"/>
        <end position="25"/>
    </location>
</feature>
<feature type="chain" id="PRO_0000000446" description="Gamma-aminobutyric acid receptor subunit alpha-5">
    <location>
        <begin position="26"/>
        <end position="464"/>
    </location>
</feature>
<feature type="topological domain" description="Extracellular" evidence="4">
    <location>
        <begin position="26"/>
        <end position="260"/>
    </location>
</feature>
<feature type="transmembrane region" description="Helical" evidence="1">
    <location>
        <begin position="261"/>
        <end position="281"/>
    </location>
</feature>
<feature type="transmembrane region" description="Helical" evidence="1">
    <location>
        <begin position="287"/>
        <end position="308"/>
    </location>
</feature>
<feature type="transmembrane region" description="Helical" evidence="1">
    <location>
        <begin position="319"/>
        <end position="340"/>
    </location>
</feature>
<feature type="topological domain" description="Cytoplasmic" evidence="4">
    <location>
        <begin position="341"/>
        <end position="429"/>
    </location>
</feature>
<feature type="transmembrane region" description="Helical" evidence="1">
    <location>
        <begin position="430"/>
        <end position="450"/>
    </location>
</feature>
<feature type="region of interest" description="Disordered" evidence="5">
    <location>
        <begin position="382"/>
        <end position="414"/>
    </location>
</feature>
<feature type="binding site" evidence="1">
    <location>
        <position position="101"/>
    </location>
    <ligand>
        <name>4-aminobutanoate</name>
        <dbReference type="ChEBI" id="CHEBI:59888"/>
        <note>ligand shared with the neighboring beta subunit GABRB3</note>
    </ligand>
</feature>
<feature type="binding site" evidence="2">
    <location>
        <position position="164"/>
    </location>
    <ligand>
        <name>4-aminobutanoate</name>
        <dbReference type="ChEBI" id="CHEBI:59888"/>
        <note>ligand shared with the neighboring beta subunit GABRB3</note>
    </ligand>
</feature>
<feature type="glycosylation site" description="N-linked (GlcNAc...) asparagine" evidence="4">
    <location>
        <position position="45"/>
    </location>
</feature>
<feature type="glycosylation site" description="N-linked (GlcNAc...) asparagine" evidence="4">
    <location>
        <position position="145"/>
    </location>
</feature>
<feature type="glycosylation site" description="N-linked (GlcNAc...) asparagine" evidence="4">
    <location>
        <position position="207"/>
    </location>
</feature>
<feature type="glycosylation site" description="N-linked (GlcNAc...) asparagine" evidence="4">
    <location>
        <position position="236"/>
    </location>
</feature>
<feature type="disulfide bond" evidence="1">
    <location>
        <begin position="173"/>
        <end position="187"/>
    </location>
</feature>
<feature type="cross-link" description="Glycyl lysine isopeptide (Lys-Gly) (interchain with G-Cter in ubiquitin)" evidence="1">
    <location>
        <position position="355"/>
    </location>
</feature>
<feature type="sequence conflict" description="In Ref. 2; CAA36248." evidence="10" ref="2">
    <original>S</original>
    <variation>R</variation>
    <location>
        <position position="126"/>
    </location>
</feature>
<feature type="sequence conflict" description="In Ref. 3; AAC42033." evidence="10" ref="3">
    <original>T</original>
    <variation>M</variation>
    <location>
        <position position="168"/>
    </location>
</feature>
<protein>
    <recommendedName>
        <fullName evidence="9">Gamma-aminobutyric acid receptor subunit alpha-5</fullName>
    </recommendedName>
    <alternativeName>
        <fullName evidence="1">GABA(A) receptor subunit alpha-5</fullName>
        <shortName>GABAAR subunit alpha-5</shortName>
    </alternativeName>
</protein>
<dbReference type="EMBL" id="X51992">
    <property type="protein sequence ID" value="CAA36248.1"/>
    <property type="molecule type" value="mRNA"/>
</dbReference>
<dbReference type="EMBL" id="L08494">
    <property type="protein sequence ID" value="AAC42033.1"/>
    <property type="molecule type" value="Genomic_DNA"/>
</dbReference>
<dbReference type="PIR" id="B34130">
    <property type="entry name" value="B34130"/>
</dbReference>
<dbReference type="RefSeq" id="NP_058991.2">
    <property type="nucleotide sequence ID" value="NM_017295.2"/>
</dbReference>
<dbReference type="RefSeq" id="XP_017444562.1">
    <property type="nucleotide sequence ID" value="XM_017589073.3"/>
</dbReference>
<dbReference type="RefSeq" id="XP_017444563.1">
    <property type="nucleotide sequence ID" value="XM_017589074.3"/>
</dbReference>
<dbReference type="RefSeq" id="XP_017444564.1">
    <property type="nucleotide sequence ID" value="XM_017589075.3"/>
</dbReference>
<dbReference type="RefSeq" id="XP_017444565.1">
    <property type="nucleotide sequence ID" value="XM_017589076.2"/>
</dbReference>
<dbReference type="RefSeq" id="XP_038965765.1">
    <property type="nucleotide sequence ID" value="XM_039109837.1"/>
</dbReference>
<dbReference type="SMR" id="P19969"/>
<dbReference type="BioGRID" id="248324">
    <property type="interactions" value="1"/>
</dbReference>
<dbReference type="ComplexPortal" id="CPX-411">
    <property type="entry name" value="GABA-A receptor, alpha5-beta3-gamma2"/>
</dbReference>
<dbReference type="CORUM" id="P19969"/>
<dbReference type="FunCoup" id="P19969">
    <property type="interactions" value="863"/>
</dbReference>
<dbReference type="IntAct" id="P19969">
    <property type="interactions" value="1"/>
</dbReference>
<dbReference type="MINT" id="P19969"/>
<dbReference type="STRING" id="10116.ENSRNOP00000014573"/>
<dbReference type="BindingDB" id="P19969"/>
<dbReference type="ChEMBL" id="CHEMBL300"/>
<dbReference type="DrugCentral" id="P19969"/>
<dbReference type="GuidetoPHARMACOLOGY" id="408"/>
<dbReference type="CarbonylDB" id="P19969"/>
<dbReference type="GlyCosmos" id="P19969">
    <property type="glycosylation" value="4 sites, No reported glycans"/>
</dbReference>
<dbReference type="GlyGen" id="P19969">
    <property type="glycosylation" value="4 sites"/>
</dbReference>
<dbReference type="iPTMnet" id="P19969"/>
<dbReference type="PhosphoSitePlus" id="P19969"/>
<dbReference type="PaxDb" id="10116-ENSRNOP00000014573"/>
<dbReference type="ABCD" id="P19969">
    <property type="antibodies" value="1 sequenced antibody"/>
</dbReference>
<dbReference type="DNASU" id="29707"/>
<dbReference type="Ensembl" id="ENSRNOT00000083894.2">
    <property type="protein sequence ID" value="ENSRNOP00000072389.1"/>
    <property type="gene ID" value="ENSRNOG00000010803.8"/>
</dbReference>
<dbReference type="GeneID" id="29707"/>
<dbReference type="KEGG" id="rno:29707"/>
<dbReference type="UCSC" id="RGD:61859">
    <property type="organism name" value="rat"/>
</dbReference>
<dbReference type="AGR" id="RGD:61859"/>
<dbReference type="CTD" id="2558"/>
<dbReference type="RGD" id="61859">
    <property type="gene designation" value="Gabra5"/>
</dbReference>
<dbReference type="eggNOG" id="KOG3642">
    <property type="taxonomic scope" value="Eukaryota"/>
</dbReference>
<dbReference type="GeneTree" id="ENSGT00940000156234"/>
<dbReference type="InParanoid" id="P19969"/>
<dbReference type="OMA" id="RCPLRIG"/>
<dbReference type="OrthoDB" id="37608at9989"/>
<dbReference type="PhylomeDB" id="P19969"/>
<dbReference type="TreeFam" id="TF315453"/>
<dbReference type="Reactome" id="R-RNO-977443">
    <property type="pathway name" value="GABA receptor activation"/>
</dbReference>
<dbReference type="PRO" id="PR:P19969"/>
<dbReference type="Proteomes" id="UP000002494">
    <property type="component" value="Chromosome 1"/>
</dbReference>
<dbReference type="Bgee" id="ENSRNOG00000010803">
    <property type="expression patterns" value="Expressed in Ammon's horn and 4 other cell types or tissues"/>
</dbReference>
<dbReference type="GO" id="GO:0044297">
    <property type="term" value="C:cell body"/>
    <property type="evidence" value="ECO:0000266"/>
    <property type="project" value="RGD"/>
</dbReference>
<dbReference type="GO" id="GO:0034707">
    <property type="term" value="C:chloride channel complex"/>
    <property type="evidence" value="ECO:0007669"/>
    <property type="project" value="UniProtKB-KW"/>
</dbReference>
<dbReference type="GO" id="GO:0005829">
    <property type="term" value="C:cytosol"/>
    <property type="evidence" value="ECO:0007669"/>
    <property type="project" value="Ensembl"/>
</dbReference>
<dbReference type="GO" id="GO:0030425">
    <property type="term" value="C:dendrite"/>
    <property type="evidence" value="ECO:0000314"/>
    <property type="project" value="RGD"/>
</dbReference>
<dbReference type="GO" id="GO:0032590">
    <property type="term" value="C:dendrite membrane"/>
    <property type="evidence" value="ECO:0000318"/>
    <property type="project" value="GO_Central"/>
</dbReference>
<dbReference type="GO" id="GO:1902711">
    <property type="term" value="C:GABA-A receptor complex"/>
    <property type="evidence" value="ECO:0000266"/>
    <property type="project" value="ComplexPortal"/>
</dbReference>
<dbReference type="GO" id="GO:0098982">
    <property type="term" value="C:GABA-ergic synapse"/>
    <property type="evidence" value="ECO:0000314"/>
    <property type="project" value="SynGO"/>
</dbReference>
<dbReference type="GO" id="GO:0032809">
    <property type="term" value="C:neuronal cell body membrane"/>
    <property type="evidence" value="ECO:0000314"/>
    <property type="project" value="RGD"/>
</dbReference>
<dbReference type="GO" id="GO:0005654">
    <property type="term" value="C:nucleoplasm"/>
    <property type="evidence" value="ECO:0007669"/>
    <property type="project" value="Ensembl"/>
</dbReference>
<dbReference type="GO" id="GO:0098794">
    <property type="term" value="C:postsynapse"/>
    <property type="evidence" value="ECO:0000318"/>
    <property type="project" value="GO_Central"/>
</dbReference>
<dbReference type="GO" id="GO:0045211">
    <property type="term" value="C:postsynaptic membrane"/>
    <property type="evidence" value="ECO:0000314"/>
    <property type="project" value="SynGO"/>
</dbReference>
<dbReference type="GO" id="GO:0099634">
    <property type="term" value="C:postsynaptic specialization membrane"/>
    <property type="evidence" value="ECO:0000314"/>
    <property type="project" value="SynGO"/>
</dbReference>
<dbReference type="GO" id="GO:0042734">
    <property type="term" value="C:presynaptic membrane"/>
    <property type="evidence" value="ECO:0000314"/>
    <property type="project" value="SynGO"/>
</dbReference>
<dbReference type="GO" id="GO:0043235">
    <property type="term" value="C:receptor complex"/>
    <property type="evidence" value="ECO:0000314"/>
    <property type="project" value="RGD"/>
</dbReference>
<dbReference type="GO" id="GO:0005254">
    <property type="term" value="F:chloride channel activity"/>
    <property type="evidence" value="ECO:0000304"/>
    <property type="project" value="RGD"/>
</dbReference>
<dbReference type="GO" id="GO:0050811">
    <property type="term" value="F:GABA receptor binding"/>
    <property type="evidence" value="ECO:0000353"/>
    <property type="project" value="RGD"/>
</dbReference>
<dbReference type="GO" id="GO:0004890">
    <property type="term" value="F:GABA-A receptor activity"/>
    <property type="evidence" value="ECO:0000314"/>
    <property type="project" value="UniProtKB"/>
</dbReference>
<dbReference type="GO" id="GO:0022851">
    <property type="term" value="F:GABA-gated chloride ion channel activity"/>
    <property type="evidence" value="ECO:0000314"/>
    <property type="project" value="UniProtKB"/>
</dbReference>
<dbReference type="GO" id="GO:0099507">
    <property type="term" value="F:ligand-gated monoatomic ion channel activity involved in regulation of presynaptic membrane potential"/>
    <property type="evidence" value="ECO:0000266"/>
    <property type="project" value="RGD"/>
</dbReference>
<dbReference type="GO" id="GO:1904315">
    <property type="term" value="F:transmitter-gated monoatomic ion channel activity involved in regulation of postsynaptic membrane potential"/>
    <property type="evidence" value="ECO:0000314"/>
    <property type="project" value="SynGO"/>
</dbReference>
<dbReference type="GO" id="GO:0008306">
    <property type="term" value="P:associative learning"/>
    <property type="evidence" value="ECO:0000266"/>
    <property type="project" value="RGD"/>
</dbReference>
<dbReference type="GO" id="GO:0001662">
    <property type="term" value="P:behavioral fear response"/>
    <property type="evidence" value="ECO:0000266"/>
    <property type="project" value="RGD"/>
</dbReference>
<dbReference type="GO" id="GO:0007268">
    <property type="term" value="P:chemical synaptic transmission"/>
    <property type="evidence" value="ECO:0000315"/>
    <property type="project" value="RGD"/>
</dbReference>
<dbReference type="GO" id="GO:1902476">
    <property type="term" value="P:chloride transmembrane transport"/>
    <property type="evidence" value="ECO:0000318"/>
    <property type="project" value="GO_Central"/>
</dbReference>
<dbReference type="GO" id="GO:0090102">
    <property type="term" value="P:cochlea development"/>
    <property type="evidence" value="ECO:0000266"/>
    <property type="project" value="RGD"/>
</dbReference>
<dbReference type="GO" id="GO:0007214">
    <property type="term" value="P:gamma-aminobutyric acid signaling pathway"/>
    <property type="evidence" value="ECO:0000266"/>
    <property type="project" value="ComplexPortal"/>
</dbReference>
<dbReference type="GO" id="GO:1904862">
    <property type="term" value="P:inhibitory synapse assembly"/>
    <property type="evidence" value="ECO:0000318"/>
    <property type="project" value="GO_Central"/>
</dbReference>
<dbReference type="GO" id="GO:0060119">
    <property type="term" value="P:inner ear receptor cell development"/>
    <property type="evidence" value="ECO:0000266"/>
    <property type="project" value="RGD"/>
</dbReference>
<dbReference type="GO" id="GO:0060384">
    <property type="term" value="P:innervation"/>
    <property type="evidence" value="ECO:0000266"/>
    <property type="project" value="RGD"/>
</dbReference>
<dbReference type="GO" id="GO:0048666">
    <property type="term" value="P:neuron development"/>
    <property type="evidence" value="ECO:0000266"/>
    <property type="project" value="RGD"/>
</dbReference>
<dbReference type="GO" id="GO:0051932">
    <property type="term" value="P:synaptic transmission, GABAergic"/>
    <property type="evidence" value="ECO:0000318"/>
    <property type="project" value="GO_Central"/>
</dbReference>
<dbReference type="CDD" id="cd19038">
    <property type="entry name" value="LGIC_ECD_GABAAR_A5"/>
    <property type="match status" value="1"/>
</dbReference>
<dbReference type="CDD" id="cd19052">
    <property type="entry name" value="LGIC_TM_GABAAR_alpha"/>
    <property type="match status" value="1"/>
</dbReference>
<dbReference type="FunFam" id="2.70.170.10:FF:000001">
    <property type="entry name" value="Gamma-aminobutyric acid A receptor subunit alpha-2"/>
    <property type="match status" value="1"/>
</dbReference>
<dbReference type="FunFam" id="1.20.58.390:FF:000002">
    <property type="entry name" value="Putative gamma-aminobutyric acid receptor subunit alpha-5"/>
    <property type="match status" value="1"/>
</dbReference>
<dbReference type="Gene3D" id="2.70.170.10">
    <property type="entry name" value="Neurotransmitter-gated ion-channel ligand-binding domain"/>
    <property type="match status" value="1"/>
</dbReference>
<dbReference type="Gene3D" id="1.20.58.390">
    <property type="entry name" value="Neurotransmitter-gated ion-channel transmembrane domain"/>
    <property type="match status" value="1"/>
</dbReference>
<dbReference type="InterPro" id="IPR006028">
    <property type="entry name" value="GABAA/Glycine_rcpt"/>
</dbReference>
<dbReference type="InterPro" id="IPR001390">
    <property type="entry name" value="GABAAa_rcpt"/>
</dbReference>
<dbReference type="InterPro" id="IPR005435">
    <property type="entry name" value="GABBAa5_rcpt"/>
</dbReference>
<dbReference type="InterPro" id="IPR047024">
    <property type="entry name" value="Gabra-1-6_TM"/>
</dbReference>
<dbReference type="InterPro" id="IPR006202">
    <property type="entry name" value="Neur_chan_lig-bd"/>
</dbReference>
<dbReference type="InterPro" id="IPR036734">
    <property type="entry name" value="Neur_chan_lig-bd_sf"/>
</dbReference>
<dbReference type="InterPro" id="IPR006201">
    <property type="entry name" value="Neur_channel"/>
</dbReference>
<dbReference type="InterPro" id="IPR036719">
    <property type="entry name" value="Neuro-gated_channel_TM_sf"/>
</dbReference>
<dbReference type="InterPro" id="IPR038050">
    <property type="entry name" value="Neuro_actylchol_rec"/>
</dbReference>
<dbReference type="InterPro" id="IPR006029">
    <property type="entry name" value="Neurotrans-gated_channel_TM"/>
</dbReference>
<dbReference type="InterPro" id="IPR018000">
    <property type="entry name" value="Neurotransmitter_ion_chnl_CS"/>
</dbReference>
<dbReference type="NCBIfam" id="TIGR00860">
    <property type="entry name" value="LIC"/>
    <property type="match status" value="1"/>
</dbReference>
<dbReference type="PANTHER" id="PTHR18945">
    <property type="entry name" value="NEUROTRANSMITTER GATED ION CHANNEL"/>
    <property type="match status" value="1"/>
</dbReference>
<dbReference type="Pfam" id="PF02931">
    <property type="entry name" value="Neur_chan_LBD"/>
    <property type="match status" value="1"/>
</dbReference>
<dbReference type="Pfam" id="PF02932">
    <property type="entry name" value="Neur_chan_memb"/>
    <property type="match status" value="1"/>
</dbReference>
<dbReference type="PRINTS" id="PR01079">
    <property type="entry name" value="GABAARALPHA"/>
</dbReference>
<dbReference type="PRINTS" id="PR01618">
    <property type="entry name" value="GABAARALPHA5"/>
</dbReference>
<dbReference type="PRINTS" id="PR00253">
    <property type="entry name" value="GABAARECEPTR"/>
</dbReference>
<dbReference type="PRINTS" id="PR00252">
    <property type="entry name" value="NRIONCHANNEL"/>
</dbReference>
<dbReference type="SUPFAM" id="SSF90112">
    <property type="entry name" value="Neurotransmitter-gated ion-channel transmembrane pore"/>
    <property type="match status" value="1"/>
</dbReference>
<dbReference type="SUPFAM" id="SSF63712">
    <property type="entry name" value="Nicotinic receptor ligand binding domain-like"/>
    <property type="match status" value="1"/>
</dbReference>
<dbReference type="PROSITE" id="PS00236">
    <property type="entry name" value="NEUROTR_ION_CHANNEL"/>
    <property type="match status" value="1"/>
</dbReference>
<sequence length="464" mass="52337">MDNGMLSRFIMTKTLLVFCISMTLSSHFGFSQMPTSSVQDETNDNITIFTRILDGLLDGYDNRLRPGLGERITQVRTDIYVTSFGPVSDTEMEYTIDVFFRQSWKDERLRFKGPMQRLPLNNLLASKIWTPDTFFHNGKKSIAHNMTTPNKLLRLEDDGTLLYTMRLTISAECPMQLEDFPMDAHACPLKFGSYAYPNSEVVYVWTNGSTKSVVVAEDGSRLNQYHLMGQTVGTENISTSTGEYTIMTAHFHLKRKIGYFVIQTYLPCIMTVILSQVSFWLNRESVPARTVFGVTTVLTMTTLSISARNSLPKVAYATAMDWFIAVCYAFVFSALIEFATVNYFTKRGWAWDGKKALEAAKIKKKERELILNKSTNAFTTGKLTHPPNIPKEQLPGGTGNAVGTASIRASEEKTSESKKTYNSISKIDKMSRIVFPILFGTFNLVYWATYLNREPVIKGATSPK</sequence>
<name>GBRA5_RAT</name>
<organism>
    <name type="scientific">Rattus norvegicus</name>
    <name type="common">Rat</name>
    <dbReference type="NCBI Taxonomy" id="10116"/>
    <lineage>
        <taxon>Eukaryota</taxon>
        <taxon>Metazoa</taxon>
        <taxon>Chordata</taxon>
        <taxon>Craniata</taxon>
        <taxon>Vertebrata</taxon>
        <taxon>Euteleostomi</taxon>
        <taxon>Mammalia</taxon>
        <taxon>Eutheria</taxon>
        <taxon>Euarchontoglires</taxon>
        <taxon>Glires</taxon>
        <taxon>Rodentia</taxon>
        <taxon>Myomorpha</taxon>
        <taxon>Muroidea</taxon>
        <taxon>Muridae</taxon>
        <taxon>Murinae</taxon>
        <taxon>Rattus</taxon>
    </lineage>
</organism>
<accession>P19969</accession>
<reference key="1">
    <citation type="journal article" date="1989" name="Neuron">
        <title>A novel alpha subunit in rat brain GABAA receptors.</title>
        <authorList>
            <person name="Khrestchatisky M."/>
            <person name="Maclennan A.J."/>
            <person name="Chiang M.Y."/>
            <person name="Xu W."/>
            <person name="Jackson M.B."/>
            <person name="Brecha N."/>
            <person name="Sternini C."/>
            <person name="Olsen R.W."/>
            <person name="Tobin A.J."/>
        </authorList>
    </citation>
    <scope>NUCLEOTIDE SEQUENCE [MRNA]</scope>
</reference>
<reference key="2">
    <citation type="journal article" date="1990" name="FEBS Lett.">
        <title>Functional expression and sites of gene transcription of a novel alpha subunit of the GABAA receptor in rat brain.</title>
        <authorList>
            <person name="Malherbe P."/>
            <person name="Sigel E."/>
            <person name="Baur R."/>
            <person name="Persohn E."/>
            <person name="Richards J.G."/>
            <person name="Moehler H."/>
        </authorList>
    </citation>
    <scope>NUCLEOTIDE SEQUENCE [MRNA]</scope>
    <scope>FUNCTION</scope>
    <scope>TRANSPORTER ACTIVITY</scope>
    <scope>TISSUE SPECIFICITY</scope>
</reference>
<reference key="3">
    <citation type="journal article" date="1990" name="J. Neurochem.">
        <title>Gamma-aminobutyric acidA receptor alpha 5-subunit creates novel type II benzodiazepine receptor pharmacology.</title>
        <authorList>
            <person name="Pritchett D.B."/>
            <person name="Seeburg P.H."/>
        </authorList>
    </citation>
    <scope>NUCLEOTIDE SEQUENCE [GENOMIC DNA]</scope>
</reference>
<reference key="4">
    <citation type="journal article" date="1991" name="FEBS Lett.">
        <title>The gamma 3-subunit of the GABAA-receptor confers sensitivity to benzodiazepine receptor ligands.</title>
        <authorList>
            <person name="Knoflach F."/>
            <person name="Rhyner T."/>
            <person name="Villa M."/>
            <person name="Kellenberger S."/>
            <person name="Drescher U."/>
            <person name="Malherbe P."/>
            <person name="Sigel E."/>
            <person name="Moehler H."/>
        </authorList>
    </citation>
    <scope>FUNCTION</scope>
    <scope>TRANSPORTER ACTIVITY</scope>
    <scope>INTERACTION WITH GABRB2 AND GABRG3</scope>
    <source>
        <strain>ZUR-SIV</strain>
        <tissue>Brain</tissue>
    </source>
</reference>
<reference key="5">
    <citation type="journal article" date="1999" name="Mol. Pharmacol.">
        <title>Incorporation of the pi subunit into functional gamma-aminobutyric Acid(A) receptors.</title>
        <authorList>
            <person name="Neelands T.R."/>
            <person name="Macdonald R.L."/>
        </authorList>
    </citation>
    <scope>FUNCTION</scope>
    <scope>TRANSPORTER ACTIVITY</scope>
    <scope>ACTIVITY REGULATION</scope>
    <scope>TISSUE SPECIFICITY</scope>
    <scope>INTERACTION WITH GABRB3; GABRG3 AND GABRP</scope>
</reference>
<evidence type="ECO:0000250" key="1">
    <source>
        <dbReference type="UniProtKB" id="P31644"/>
    </source>
</evidence>
<evidence type="ECO:0000250" key="2">
    <source>
        <dbReference type="UniProtKB" id="P62813"/>
    </source>
</evidence>
<evidence type="ECO:0000250" key="3">
    <source>
        <dbReference type="UniProtKB" id="Q8BHJ7"/>
    </source>
</evidence>
<evidence type="ECO:0000255" key="4"/>
<evidence type="ECO:0000256" key="5">
    <source>
        <dbReference type="SAM" id="MobiDB-lite"/>
    </source>
</evidence>
<evidence type="ECO:0000269" key="6">
    <source>
    </source>
</evidence>
<evidence type="ECO:0000269" key="7">
    <source>
    </source>
</evidence>
<evidence type="ECO:0000269" key="8">
    <source>
    </source>
</evidence>
<evidence type="ECO:0000303" key="9">
    <source>
    </source>
</evidence>
<evidence type="ECO:0000305" key="10"/>
<evidence type="ECO:0000312" key="11">
    <source>
        <dbReference type="RGD" id="61859"/>
    </source>
</evidence>